<name>RSMH_MYCSS</name>
<organism>
    <name type="scientific">Mycobacterium sp. (strain MCS)</name>
    <dbReference type="NCBI Taxonomy" id="164756"/>
    <lineage>
        <taxon>Bacteria</taxon>
        <taxon>Bacillati</taxon>
        <taxon>Actinomycetota</taxon>
        <taxon>Actinomycetes</taxon>
        <taxon>Mycobacteriales</taxon>
        <taxon>Mycobacteriaceae</taxon>
        <taxon>Mycobacterium</taxon>
    </lineage>
</organism>
<accession>Q1B6W3</accession>
<protein>
    <recommendedName>
        <fullName evidence="1">Ribosomal RNA small subunit methyltransferase H</fullName>
        <ecNumber evidence="1">2.1.1.199</ecNumber>
    </recommendedName>
    <alternativeName>
        <fullName evidence="1">16S rRNA m(4)C1402 methyltransferase</fullName>
    </alternativeName>
    <alternativeName>
        <fullName evidence="1">rRNA (cytosine-N(4)-)-methyltransferase RsmH</fullName>
    </alternativeName>
</protein>
<proteinExistence type="inferred from homology"/>
<sequence length="370" mass="39946">MKLCATSSEPARAAWPLSEPALAYFPDARSASDRDLAAGAYSPGVAMEHIPVLLDRCVELLTPALTRRNPDGRGAVLVDATLGAGGHAHRFLSDLPGLHLIGLDRDPQALQIAGERLAPFGDRVSLVRTRYDGIDDALAQTGVAEVSGFLFDLGVSSMQLDRTERGFSYSADAPLDMRMDSDAPLTAADVVNTFAEKDITRILREFGEERFAARIAKHIVRRRPLNTTGELVELLYDAIPAPARRTGGHPAKRTFQALRIAVNSELDSLRAAVPAALAALETGGRIVVMAYQSLEDRIVKTEFAAATASRTPPGLPVELPGHEPEFVALTRGAERATPEEIERNPRSAPVRLRALEKVAGRPTTARRDAR</sequence>
<evidence type="ECO:0000255" key="1">
    <source>
        <dbReference type="HAMAP-Rule" id="MF_01007"/>
    </source>
</evidence>
<evidence type="ECO:0000256" key="2">
    <source>
        <dbReference type="SAM" id="MobiDB-lite"/>
    </source>
</evidence>
<evidence type="ECO:0000305" key="3"/>
<comment type="function">
    <text evidence="1">Specifically methylates the N4 position of cytidine in position 1402 (C1402) of 16S rRNA.</text>
</comment>
<comment type="catalytic activity">
    <reaction evidence="1">
        <text>cytidine(1402) in 16S rRNA + S-adenosyl-L-methionine = N(4)-methylcytidine(1402) in 16S rRNA + S-adenosyl-L-homocysteine + H(+)</text>
        <dbReference type="Rhea" id="RHEA:42928"/>
        <dbReference type="Rhea" id="RHEA-COMP:10286"/>
        <dbReference type="Rhea" id="RHEA-COMP:10287"/>
        <dbReference type="ChEBI" id="CHEBI:15378"/>
        <dbReference type="ChEBI" id="CHEBI:57856"/>
        <dbReference type="ChEBI" id="CHEBI:59789"/>
        <dbReference type="ChEBI" id="CHEBI:74506"/>
        <dbReference type="ChEBI" id="CHEBI:82748"/>
        <dbReference type="EC" id="2.1.1.199"/>
    </reaction>
</comment>
<comment type="subcellular location">
    <subcellularLocation>
        <location evidence="1">Cytoplasm</location>
    </subcellularLocation>
</comment>
<comment type="similarity">
    <text evidence="1">Belongs to the methyltransferase superfamily. RsmH family.</text>
</comment>
<comment type="sequence caution" evidence="3">
    <conflict type="erroneous initiation">
        <sequence resource="EMBL-CDS" id="ABG09371"/>
    </conflict>
    <text>Truncated N-terminus.</text>
</comment>
<reference key="1">
    <citation type="submission" date="2006-06" db="EMBL/GenBank/DDBJ databases">
        <title>Complete sequence of chromosome of Mycobacterium sp. MCS.</title>
        <authorList>
            <consortium name="US DOE Joint Genome Institute"/>
            <person name="Copeland A."/>
            <person name="Lucas S."/>
            <person name="Lapidus A."/>
            <person name="Barry K."/>
            <person name="Detter J.C."/>
            <person name="Glavina del Rio T."/>
            <person name="Hammon N."/>
            <person name="Israni S."/>
            <person name="Dalin E."/>
            <person name="Tice H."/>
            <person name="Pitluck S."/>
            <person name="Martinez M."/>
            <person name="Schmutz J."/>
            <person name="Larimer F."/>
            <person name="Land M."/>
            <person name="Hauser L."/>
            <person name="Kyrpides N."/>
            <person name="Kim E."/>
            <person name="Miller C.D."/>
            <person name="Hughes J.E."/>
            <person name="Anderson A.J."/>
            <person name="Sims R.C."/>
            <person name="Richardson P."/>
        </authorList>
    </citation>
    <scope>NUCLEOTIDE SEQUENCE [LARGE SCALE GENOMIC DNA]</scope>
    <source>
        <strain>MCS</strain>
    </source>
</reference>
<keyword id="KW-0963">Cytoplasm</keyword>
<keyword id="KW-0489">Methyltransferase</keyword>
<keyword id="KW-0698">rRNA processing</keyword>
<keyword id="KW-0949">S-adenosyl-L-methionine</keyword>
<keyword id="KW-0808">Transferase</keyword>
<dbReference type="EC" id="2.1.1.199" evidence="1"/>
<dbReference type="EMBL" id="CP000384">
    <property type="protein sequence ID" value="ABG09371.1"/>
    <property type="status" value="ALT_INIT"/>
    <property type="molecule type" value="Genomic_DNA"/>
</dbReference>
<dbReference type="SMR" id="Q1B6W3"/>
<dbReference type="KEGG" id="mmc:Mmcs_3264"/>
<dbReference type="HOGENOM" id="CLU_038422_0_0_11"/>
<dbReference type="GO" id="GO:0005737">
    <property type="term" value="C:cytoplasm"/>
    <property type="evidence" value="ECO:0007669"/>
    <property type="project" value="UniProtKB-SubCell"/>
</dbReference>
<dbReference type="GO" id="GO:0071424">
    <property type="term" value="F:rRNA (cytosine-N4-)-methyltransferase activity"/>
    <property type="evidence" value="ECO:0007669"/>
    <property type="project" value="UniProtKB-UniRule"/>
</dbReference>
<dbReference type="GO" id="GO:0070475">
    <property type="term" value="P:rRNA base methylation"/>
    <property type="evidence" value="ECO:0007669"/>
    <property type="project" value="UniProtKB-UniRule"/>
</dbReference>
<dbReference type="FunFam" id="1.10.150.170:FF:000001">
    <property type="entry name" value="Ribosomal RNA small subunit methyltransferase H"/>
    <property type="match status" value="1"/>
</dbReference>
<dbReference type="Gene3D" id="1.10.150.170">
    <property type="entry name" value="Putative methyltransferase TM0872, insert domain"/>
    <property type="match status" value="1"/>
</dbReference>
<dbReference type="Gene3D" id="3.40.50.150">
    <property type="entry name" value="Vaccinia Virus protein VP39"/>
    <property type="match status" value="1"/>
</dbReference>
<dbReference type="HAMAP" id="MF_01007">
    <property type="entry name" value="16SrRNA_methyltr_H"/>
    <property type="match status" value="1"/>
</dbReference>
<dbReference type="InterPro" id="IPR002903">
    <property type="entry name" value="RsmH"/>
</dbReference>
<dbReference type="InterPro" id="IPR023397">
    <property type="entry name" value="SAM-dep_MeTrfase_MraW_recog"/>
</dbReference>
<dbReference type="InterPro" id="IPR029063">
    <property type="entry name" value="SAM-dependent_MTases_sf"/>
</dbReference>
<dbReference type="NCBIfam" id="TIGR00006">
    <property type="entry name" value="16S rRNA (cytosine(1402)-N(4))-methyltransferase RsmH"/>
    <property type="match status" value="1"/>
</dbReference>
<dbReference type="PANTHER" id="PTHR11265:SF0">
    <property type="entry name" value="12S RRNA N4-METHYLCYTIDINE METHYLTRANSFERASE"/>
    <property type="match status" value="1"/>
</dbReference>
<dbReference type="PANTHER" id="PTHR11265">
    <property type="entry name" value="S-ADENOSYL-METHYLTRANSFERASE MRAW"/>
    <property type="match status" value="1"/>
</dbReference>
<dbReference type="Pfam" id="PF01795">
    <property type="entry name" value="Methyltransf_5"/>
    <property type="match status" value="1"/>
</dbReference>
<dbReference type="PIRSF" id="PIRSF004486">
    <property type="entry name" value="MraW"/>
    <property type="match status" value="1"/>
</dbReference>
<dbReference type="SUPFAM" id="SSF81799">
    <property type="entry name" value="Putative methyltransferase TM0872, insert domain"/>
    <property type="match status" value="1"/>
</dbReference>
<dbReference type="SUPFAM" id="SSF53335">
    <property type="entry name" value="S-adenosyl-L-methionine-dependent methyltransferases"/>
    <property type="match status" value="1"/>
</dbReference>
<gene>
    <name evidence="1" type="primary">rsmH</name>
    <name type="synonym">mraW</name>
    <name type="ordered locus">Mmcs_3264</name>
</gene>
<feature type="chain" id="PRO_0000386994" description="Ribosomal RNA small subunit methyltransferase H">
    <location>
        <begin position="1"/>
        <end position="370"/>
    </location>
</feature>
<feature type="region of interest" description="Disordered" evidence="2">
    <location>
        <begin position="332"/>
        <end position="370"/>
    </location>
</feature>
<feature type="compositionally biased region" description="Basic and acidic residues" evidence="2">
    <location>
        <begin position="332"/>
        <end position="345"/>
    </location>
</feature>
<feature type="compositionally biased region" description="Basic and acidic residues" evidence="2">
    <location>
        <begin position="353"/>
        <end position="370"/>
    </location>
</feature>
<feature type="binding site" evidence="1">
    <location>
        <begin position="85"/>
        <end position="87"/>
    </location>
    <ligand>
        <name>S-adenosyl-L-methionine</name>
        <dbReference type="ChEBI" id="CHEBI:59789"/>
    </ligand>
</feature>
<feature type="binding site" evidence="1">
    <location>
        <position position="104"/>
    </location>
    <ligand>
        <name>S-adenosyl-L-methionine</name>
        <dbReference type="ChEBI" id="CHEBI:59789"/>
    </ligand>
</feature>
<feature type="binding site" evidence="1">
    <location>
        <position position="131"/>
    </location>
    <ligand>
        <name>S-adenosyl-L-methionine</name>
        <dbReference type="ChEBI" id="CHEBI:59789"/>
    </ligand>
</feature>
<feature type="binding site" evidence="1">
    <location>
        <position position="152"/>
    </location>
    <ligand>
        <name>S-adenosyl-L-methionine</name>
        <dbReference type="ChEBI" id="CHEBI:59789"/>
    </ligand>
</feature>
<feature type="binding site" evidence="1">
    <location>
        <position position="159"/>
    </location>
    <ligand>
        <name>S-adenosyl-L-methionine</name>
        <dbReference type="ChEBI" id="CHEBI:59789"/>
    </ligand>
</feature>